<proteinExistence type="inferred from homology"/>
<gene>
    <name evidence="1" type="primary">nrdI</name>
    <name type="ordered locus">STY2931</name>
    <name type="ordered locus">t2703</name>
</gene>
<feature type="chain" id="PRO_0000164331" description="Protein NrdI">
    <location>
        <begin position="1"/>
        <end position="136"/>
    </location>
</feature>
<sequence length="136" mass="15298">MSALVYFSSSSENTHRFMQRLGLPATRIPLNERERIQVDEPYILVVPSYGGGGMAGAVPRQVIRFLNDEHNRARIRGVIASGNRNFGDAWGCAGDVIAQKCGVPWLYRFELMGTQRDIDNVRKGVNEFWQQSPRSA</sequence>
<dbReference type="EMBL" id="AL513382">
    <property type="protein sequence ID" value="CAD05917.1"/>
    <property type="molecule type" value="Genomic_DNA"/>
</dbReference>
<dbReference type="EMBL" id="AE014613">
    <property type="protein sequence ID" value="AAO70270.1"/>
    <property type="molecule type" value="Genomic_DNA"/>
</dbReference>
<dbReference type="RefSeq" id="NP_457205.1">
    <property type="nucleotide sequence ID" value="NC_003198.1"/>
</dbReference>
<dbReference type="RefSeq" id="WP_001275403.1">
    <property type="nucleotide sequence ID" value="NZ_WSUR01000031.1"/>
</dbReference>
<dbReference type="SMR" id="Q8Z4E6"/>
<dbReference type="STRING" id="220341.gene:17586822"/>
<dbReference type="KEGG" id="stt:t2703"/>
<dbReference type="KEGG" id="sty:STY2931"/>
<dbReference type="PATRIC" id="fig|220341.7.peg.2983"/>
<dbReference type="eggNOG" id="COG1780">
    <property type="taxonomic scope" value="Bacteria"/>
</dbReference>
<dbReference type="HOGENOM" id="CLU_114845_0_0_6"/>
<dbReference type="OMA" id="NTHRFVG"/>
<dbReference type="OrthoDB" id="350535at2"/>
<dbReference type="Proteomes" id="UP000000541">
    <property type="component" value="Chromosome"/>
</dbReference>
<dbReference type="Proteomes" id="UP000002670">
    <property type="component" value="Chromosome"/>
</dbReference>
<dbReference type="GO" id="GO:0010181">
    <property type="term" value="F:FMN binding"/>
    <property type="evidence" value="ECO:0007669"/>
    <property type="project" value="InterPro"/>
</dbReference>
<dbReference type="GO" id="GO:0036211">
    <property type="term" value="P:protein modification process"/>
    <property type="evidence" value="ECO:0007669"/>
    <property type="project" value="InterPro"/>
</dbReference>
<dbReference type="FunFam" id="3.40.50.360:FF:000005">
    <property type="entry name" value="Protein NrdI"/>
    <property type="match status" value="1"/>
</dbReference>
<dbReference type="Gene3D" id="3.40.50.360">
    <property type="match status" value="1"/>
</dbReference>
<dbReference type="HAMAP" id="MF_00128">
    <property type="entry name" value="NrdI"/>
    <property type="match status" value="1"/>
</dbReference>
<dbReference type="InterPro" id="IPR029039">
    <property type="entry name" value="Flavoprotein-like_sf"/>
</dbReference>
<dbReference type="InterPro" id="IPR020852">
    <property type="entry name" value="RNR_Ib_NrdI_bac"/>
</dbReference>
<dbReference type="InterPro" id="IPR004465">
    <property type="entry name" value="RNR_NrdI"/>
</dbReference>
<dbReference type="NCBIfam" id="TIGR00333">
    <property type="entry name" value="nrdI"/>
    <property type="match status" value="1"/>
</dbReference>
<dbReference type="PANTHER" id="PTHR37297">
    <property type="entry name" value="PROTEIN NRDI"/>
    <property type="match status" value="1"/>
</dbReference>
<dbReference type="PANTHER" id="PTHR37297:SF1">
    <property type="entry name" value="PROTEIN NRDI"/>
    <property type="match status" value="1"/>
</dbReference>
<dbReference type="Pfam" id="PF07972">
    <property type="entry name" value="Flavodoxin_NdrI"/>
    <property type="match status" value="1"/>
</dbReference>
<dbReference type="PIRSF" id="PIRSF005087">
    <property type="entry name" value="NrdI"/>
    <property type="match status" value="1"/>
</dbReference>
<dbReference type="SUPFAM" id="SSF52218">
    <property type="entry name" value="Flavoproteins"/>
    <property type="match status" value="1"/>
</dbReference>
<accession>Q8Z4E6</accession>
<name>NRDI_SALTI</name>
<organism>
    <name type="scientific">Salmonella typhi</name>
    <dbReference type="NCBI Taxonomy" id="90370"/>
    <lineage>
        <taxon>Bacteria</taxon>
        <taxon>Pseudomonadati</taxon>
        <taxon>Pseudomonadota</taxon>
        <taxon>Gammaproteobacteria</taxon>
        <taxon>Enterobacterales</taxon>
        <taxon>Enterobacteriaceae</taxon>
        <taxon>Salmonella</taxon>
    </lineage>
</organism>
<reference key="1">
    <citation type="journal article" date="2001" name="Nature">
        <title>Complete genome sequence of a multiple drug resistant Salmonella enterica serovar Typhi CT18.</title>
        <authorList>
            <person name="Parkhill J."/>
            <person name="Dougan G."/>
            <person name="James K.D."/>
            <person name="Thomson N.R."/>
            <person name="Pickard D."/>
            <person name="Wain J."/>
            <person name="Churcher C.M."/>
            <person name="Mungall K.L."/>
            <person name="Bentley S.D."/>
            <person name="Holden M.T.G."/>
            <person name="Sebaihia M."/>
            <person name="Baker S."/>
            <person name="Basham D."/>
            <person name="Brooks K."/>
            <person name="Chillingworth T."/>
            <person name="Connerton P."/>
            <person name="Cronin A."/>
            <person name="Davis P."/>
            <person name="Davies R.M."/>
            <person name="Dowd L."/>
            <person name="White N."/>
            <person name="Farrar J."/>
            <person name="Feltwell T."/>
            <person name="Hamlin N."/>
            <person name="Haque A."/>
            <person name="Hien T.T."/>
            <person name="Holroyd S."/>
            <person name="Jagels K."/>
            <person name="Krogh A."/>
            <person name="Larsen T.S."/>
            <person name="Leather S."/>
            <person name="Moule S."/>
            <person name="O'Gaora P."/>
            <person name="Parry C."/>
            <person name="Quail M.A."/>
            <person name="Rutherford K.M."/>
            <person name="Simmonds M."/>
            <person name="Skelton J."/>
            <person name="Stevens K."/>
            <person name="Whitehead S."/>
            <person name="Barrell B.G."/>
        </authorList>
    </citation>
    <scope>NUCLEOTIDE SEQUENCE [LARGE SCALE GENOMIC DNA]</scope>
    <source>
        <strain>CT18</strain>
    </source>
</reference>
<reference key="2">
    <citation type="journal article" date="2003" name="J. Bacteriol.">
        <title>Comparative genomics of Salmonella enterica serovar Typhi strains Ty2 and CT18.</title>
        <authorList>
            <person name="Deng W."/>
            <person name="Liou S.-R."/>
            <person name="Plunkett G. III"/>
            <person name="Mayhew G.F."/>
            <person name="Rose D.J."/>
            <person name="Burland V."/>
            <person name="Kodoyianni V."/>
            <person name="Schwartz D.C."/>
            <person name="Blattner F.R."/>
        </authorList>
    </citation>
    <scope>NUCLEOTIDE SEQUENCE [LARGE SCALE GENOMIC DNA]</scope>
    <source>
        <strain>ATCC 700931 / Ty2</strain>
    </source>
</reference>
<protein>
    <recommendedName>
        <fullName evidence="1">Protein NrdI</fullName>
    </recommendedName>
</protein>
<evidence type="ECO:0000255" key="1">
    <source>
        <dbReference type="HAMAP-Rule" id="MF_00128"/>
    </source>
</evidence>
<comment type="function">
    <text evidence="1">Probably involved in ribonucleotide reductase function.</text>
</comment>
<comment type="similarity">
    <text evidence="1">Belongs to the NrdI family.</text>
</comment>